<accession>B7K240</accession>
<dbReference type="EMBL" id="CP001287">
    <property type="protein sequence ID" value="ACK64347.1"/>
    <property type="molecule type" value="Genomic_DNA"/>
</dbReference>
<dbReference type="RefSeq" id="WP_012593624.1">
    <property type="nucleotide sequence ID" value="NC_011726.1"/>
</dbReference>
<dbReference type="SMR" id="B7K240"/>
<dbReference type="STRING" id="41431.PCC8801_0244"/>
<dbReference type="KEGG" id="cyp:PCC8801_0244"/>
<dbReference type="eggNOG" id="COG0255">
    <property type="taxonomic scope" value="Bacteria"/>
</dbReference>
<dbReference type="HOGENOM" id="CLU_158491_0_0_3"/>
<dbReference type="OrthoDB" id="9815192at2"/>
<dbReference type="Proteomes" id="UP000008204">
    <property type="component" value="Chromosome"/>
</dbReference>
<dbReference type="GO" id="GO:0022625">
    <property type="term" value="C:cytosolic large ribosomal subunit"/>
    <property type="evidence" value="ECO:0007669"/>
    <property type="project" value="TreeGrafter"/>
</dbReference>
<dbReference type="GO" id="GO:0003735">
    <property type="term" value="F:structural constituent of ribosome"/>
    <property type="evidence" value="ECO:0007669"/>
    <property type="project" value="InterPro"/>
</dbReference>
<dbReference type="GO" id="GO:0006412">
    <property type="term" value="P:translation"/>
    <property type="evidence" value="ECO:0007669"/>
    <property type="project" value="UniProtKB-UniRule"/>
</dbReference>
<dbReference type="CDD" id="cd00427">
    <property type="entry name" value="Ribosomal_L29_HIP"/>
    <property type="match status" value="1"/>
</dbReference>
<dbReference type="Gene3D" id="1.10.287.310">
    <property type="match status" value="1"/>
</dbReference>
<dbReference type="HAMAP" id="MF_00374">
    <property type="entry name" value="Ribosomal_uL29"/>
    <property type="match status" value="1"/>
</dbReference>
<dbReference type="InterPro" id="IPR050063">
    <property type="entry name" value="Ribosomal_protein_uL29"/>
</dbReference>
<dbReference type="InterPro" id="IPR001854">
    <property type="entry name" value="Ribosomal_uL29"/>
</dbReference>
<dbReference type="InterPro" id="IPR018254">
    <property type="entry name" value="Ribosomal_uL29_CS"/>
</dbReference>
<dbReference type="InterPro" id="IPR036049">
    <property type="entry name" value="Ribosomal_uL29_sf"/>
</dbReference>
<dbReference type="NCBIfam" id="TIGR00012">
    <property type="entry name" value="L29"/>
    <property type="match status" value="1"/>
</dbReference>
<dbReference type="PANTHER" id="PTHR10916">
    <property type="entry name" value="60S RIBOSOMAL PROTEIN L35/50S RIBOSOMAL PROTEIN L29"/>
    <property type="match status" value="1"/>
</dbReference>
<dbReference type="PANTHER" id="PTHR10916:SF0">
    <property type="entry name" value="LARGE RIBOSOMAL SUBUNIT PROTEIN UL29C"/>
    <property type="match status" value="1"/>
</dbReference>
<dbReference type="Pfam" id="PF00831">
    <property type="entry name" value="Ribosomal_L29"/>
    <property type="match status" value="1"/>
</dbReference>
<dbReference type="SUPFAM" id="SSF46561">
    <property type="entry name" value="Ribosomal protein L29 (L29p)"/>
    <property type="match status" value="1"/>
</dbReference>
<dbReference type="PROSITE" id="PS00579">
    <property type="entry name" value="RIBOSOMAL_L29"/>
    <property type="match status" value="1"/>
</dbReference>
<proteinExistence type="inferred from homology"/>
<keyword id="KW-1185">Reference proteome</keyword>
<keyword id="KW-0687">Ribonucleoprotein</keyword>
<keyword id="KW-0689">Ribosomal protein</keyword>
<comment type="similarity">
    <text evidence="1">Belongs to the universal ribosomal protein uL29 family.</text>
</comment>
<sequence length="78" mass="9251">MPLPKIEDARKLNDEELVEEILAAKRQLFTLRFQKATNRLEKTHEFKHTRHRLAQLMTVERERQLQAQSAPSVTPEEE</sequence>
<reference key="1">
    <citation type="journal article" date="2011" name="MBio">
        <title>Novel metabolic attributes of the genus Cyanothece, comprising a group of unicellular nitrogen-fixing Cyanobacteria.</title>
        <authorList>
            <person name="Bandyopadhyay A."/>
            <person name="Elvitigala T."/>
            <person name="Welsh E."/>
            <person name="Stockel J."/>
            <person name="Liberton M."/>
            <person name="Min H."/>
            <person name="Sherman L.A."/>
            <person name="Pakrasi H.B."/>
        </authorList>
    </citation>
    <scope>NUCLEOTIDE SEQUENCE [LARGE SCALE GENOMIC DNA]</scope>
    <source>
        <strain>PCC 8801 / RF-1</strain>
    </source>
</reference>
<protein>
    <recommendedName>
        <fullName evidence="1">Large ribosomal subunit protein uL29</fullName>
    </recommendedName>
    <alternativeName>
        <fullName evidence="2">50S ribosomal protein L29</fullName>
    </alternativeName>
</protein>
<organism>
    <name type="scientific">Rippkaea orientalis (strain PCC 8801 / RF-1)</name>
    <name type="common">Cyanothece sp. (strain PCC 8801)</name>
    <dbReference type="NCBI Taxonomy" id="41431"/>
    <lineage>
        <taxon>Bacteria</taxon>
        <taxon>Bacillati</taxon>
        <taxon>Cyanobacteriota</taxon>
        <taxon>Cyanophyceae</taxon>
        <taxon>Oscillatoriophycideae</taxon>
        <taxon>Chroococcales</taxon>
        <taxon>Aphanothecaceae</taxon>
        <taxon>Rippkaea</taxon>
        <taxon>Rippkaea orientalis</taxon>
    </lineage>
</organism>
<evidence type="ECO:0000255" key="1">
    <source>
        <dbReference type="HAMAP-Rule" id="MF_00374"/>
    </source>
</evidence>
<evidence type="ECO:0000305" key="2"/>
<feature type="chain" id="PRO_1000121758" description="Large ribosomal subunit protein uL29">
    <location>
        <begin position="1"/>
        <end position="78"/>
    </location>
</feature>
<gene>
    <name evidence="1" type="primary">rpmC</name>
    <name evidence="1" type="synonym">rpl29</name>
    <name type="ordered locus">PCC8801_0244</name>
</gene>
<name>RL29_RIPO1</name>